<organism>
    <name type="scientific">Mus musculus</name>
    <name type="common">Mouse</name>
    <dbReference type="NCBI Taxonomy" id="10090"/>
    <lineage>
        <taxon>Eukaryota</taxon>
        <taxon>Metazoa</taxon>
        <taxon>Chordata</taxon>
        <taxon>Craniata</taxon>
        <taxon>Vertebrata</taxon>
        <taxon>Euteleostomi</taxon>
        <taxon>Mammalia</taxon>
        <taxon>Eutheria</taxon>
        <taxon>Euarchontoglires</taxon>
        <taxon>Glires</taxon>
        <taxon>Rodentia</taxon>
        <taxon>Myomorpha</taxon>
        <taxon>Muroidea</taxon>
        <taxon>Muridae</taxon>
        <taxon>Murinae</taxon>
        <taxon>Mus</taxon>
        <taxon>Mus</taxon>
    </lineage>
</organism>
<sequence>MAEPWAGQFLQALPATVLGALGTLGSDFLREWETQDMRVTLFKLLLLWLVLSLLGIQLAWGFYGNTVTGLYHRPDPHPQPPAAMGVFLPPGLGGQNGSTPDGSTHFSSWEIAANEALKTHRE</sequence>
<accession>Q8VEA7</accession>
<evidence type="ECO:0000250" key="1"/>
<evidence type="ECO:0000250" key="2">
    <source>
        <dbReference type="UniProtKB" id="P57738"/>
    </source>
</evidence>
<evidence type="ECO:0000255" key="3"/>
<evidence type="ECO:0000256" key="4">
    <source>
        <dbReference type="SAM" id="MobiDB-lite"/>
    </source>
</evidence>
<evidence type="ECO:0000269" key="5">
    <source>
    </source>
</evidence>
<evidence type="ECO:0000305" key="6"/>
<keyword id="KW-0007">Acetylation</keyword>
<keyword id="KW-0325">Glycoprotein</keyword>
<keyword id="KW-0472">Membrane</keyword>
<keyword id="KW-1185">Reference proteome</keyword>
<keyword id="KW-0812">Transmembrane</keyword>
<keyword id="KW-1133">Transmembrane helix</keyword>
<dbReference type="EMBL" id="AK133663">
    <property type="protein sequence ID" value="BAE21771.1"/>
    <property type="molecule type" value="mRNA"/>
</dbReference>
<dbReference type="EMBL" id="BC019397">
    <property type="protein sequence ID" value="AAH19397.1"/>
    <property type="molecule type" value="mRNA"/>
</dbReference>
<dbReference type="CCDS" id="CCDS23520.1"/>
<dbReference type="RefSeq" id="NP_598747.1">
    <property type="nucleotide sequence ID" value="NM_133986.3"/>
</dbReference>
<dbReference type="FunCoup" id="Q8VEA7">
    <property type="interactions" value="165"/>
</dbReference>
<dbReference type="STRING" id="10090.ENSMUSP00000045063"/>
<dbReference type="GlyCosmos" id="Q8VEA7">
    <property type="glycosylation" value="1 site, No reported glycans"/>
</dbReference>
<dbReference type="GlyGen" id="Q8VEA7">
    <property type="glycosylation" value="1 site"/>
</dbReference>
<dbReference type="iPTMnet" id="Q8VEA7"/>
<dbReference type="PhosphoSitePlus" id="Q8VEA7"/>
<dbReference type="PaxDb" id="10090-ENSMUSP00000045063"/>
<dbReference type="Antibodypedia" id="1537">
    <property type="antibodies" value="65 antibodies from 21 providers"/>
</dbReference>
<dbReference type="DNASU" id="102791"/>
<dbReference type="Ensembl" id="ENSMUST00000044725.9">
    <property type="protein sequence ID" value="ENSMUSP00000045063.8"/>
    <property type="gene ID" value="ENSMUSG00000039461.13"/>
</dbReference>
<dbReference type="GeneID" id="102791"/>
<dbReference type="KEGG" id="mmu:102791"/>
<dbReference type="UCSC" id="uc009rpd.1">
    <property type="organism name" value="mouse"/>
</dbReference>
<dbReference type="AGR" id="MGI:1918829"/>
<dbReference type="CTD" id="6988"/>
<dbReference type="MGI" id="MGI:1918829">
    <property type="gene designation" value="Tcta"/>
</dbReference>
<dbReference type="VEuPathDB" id="HostDB:ENSMUSG00000039461"/>
<dbReference type="eggNOG" id="ENOG502S6IC">
    <property type="taxonomic scope" value="Eukaryota"/>
</dbReference>
<dbReference type="GeneTree" id="ENSGT00390000004490"/>
<dbReference type="InParanoid" id="Q8VEA7"/>
<dbReference type="OrthoDB" id="80510at9989"/>
<dbReference type="PhylomeDB" id="Q8VEA7"/>
<dbReference type="TreeFam" id="TF330748"/>
<dbReference type="BioGRID-ORCS" id="102791">
    <property type="hits" value="2 hits in 63 CRISPR screens"/>
</dbReference>
<dbReference type="ChiTaRS" id="Tcta">
    <property type="organism name" value="mouse"/>
</dbReference>
<dbReference type="PRO" id="PR:Q8VEA7"/>
<dbReference type="Proteomes" id="UP000000589">
    <property type="component" value="Chromosome 9"/>
</dbReference>
<dbReference type="RNAct" id="Q8VEA7">
    <property type="molecule type" value="protein"/>
</dbReference>
<dbReference type="Bgee" id="ENSMUSG00000039461">
    <property type="expression patterns" value="Expressed in motor neuron and 268 other cell types or tissues"/>
</dbReference>
<dbReference type="ExpressionAtlas" id="Q8VEA7">
    <property type="expression patterns" value="baseline and differential"/>
</dbReference>
<dbReference type="GO" id="GO:0016020">
    <property type="term" value="C:membrane"/>
    <property type="evidence" value="ECO:0007669"/>
    <property type="project" value="UniProtKB-SubCell"/>
</dbReference>
<dbReference type="InterPro" id="IPR016560">
    <property type="entry name" value="TCTA"/>
</dbReference>
<dbReference type="PANTHER" id="PTHR32267">
    <property type="entry name" value="T-CELL LEUKEMIA TRANSLOCATION-ALTERED GENE PROTEIN"/>
    <property type="match status" value="1"/>
</dbReference>
<dbReference type="PANTHER" id="PTHR32267:SF2">
    <property type="entry name" value="T-CELL LEUKEMIA TRANSLOCATION-ALTERED GENE PROTEIN"/>
    <property type="match status" value="1"/>
</dbReference>
<dbReference type="Pfam" id="PF15128">
    <property type="entry name" value="T_cell_tran_alt"/>
    <property type="match status" value="1"/>
</dbReference>
<dbReference type="PIRSF" id="PIRSF009935">
    <property type="entry name" value="TCTA"/>
    <property type="match status" value="1"/>
</dbReference>
<proteinExistence type="evidence at transcript level"/>
<protein>
    <recommendedName>
        <fullName>T-cell leukemia translocation-altered gene protein homolog</fullName>
    </recommendedName>
</protein>
<feature type="initiator methionine" description="Removed" evidence="2">
    <location>
        <position position="1"/>
    </location>
</feature>
<feature type="chain" id="PRO_0000301679" description="T-cell leukemia translocation-altered gene protein homolog">
    <location>
        <begin position="2"/>
        <end position="122"/>
    </location>
</feature>
<feature type="topological domain" description="Extracellular" evidence="3">
    <location>
        <begin position="2"/>
        <end position="8"/>
    </location>
</feature>
<feature type="transmembrane region" description="Helical" evidence="3">
    <location>
        <begin position="9"/>
        <end position="29"/>
    </location>
</feature>
<feature type="topological domain" description="Cytoplasmic" evidence="3">
    <location>
        <begin position="30"/>
        <end position="43"/>
    </location>
</feature>
<feature type="transmembrane region" description="Helical" evidence="3">
    <location>
        <begin position="44"/>
        <end position="64"/>
    </location>
</feature>
<feature type="topological domain" description="Extracellular" evidence="3">
    <location>
        <begin position="65"/>
        <end position="122"/>
    </location>
</feature>
<feature type="region of interest" description="Disordered" evidence="4">
    <location>
        <begin position="82"/>
        <end position="103"/>
    </location>
</feature>
<feature type="modified residue" description="N-acetylalanine" evidence="2">
    <location>
        <position position="2"/>
    </location>
</feature>
<feature type="glycosylation site" description="N-linked (GlcNAc...) asparagine" evidence="3">
    <location>
        <position position="96"/>
    </location>
</feature>
<gene>
    <name type="primary">Tcta</name>
</gene>
<name>TCTA_MOUSE</name>
<comment type="function">
    <text evidence="1 5">May be required for cellular fusion during osteoclastogenesis.</text>
</comment>
<comment type="subcellular location">
    <subcellularLocation>
        <location evidence="6">Membrane</location>
        <topology evidence="6">Multi-pass membrane protein</topology>
    </subcellularLocation>
</comment>
<comment type="similarity">
    <text evidence="6">Belongs to the TCTA family.</text>
</comment>
<comment type="caution">
    <text evidence="6">Although demonstrated for the human ortholog, involvement in osteoclastogenesis failed to be demonstrated in mouse cells.</text>
</comment>
<reference key="1">
    <citation type="journal article" date="2005" name="Science">
        <title>The transcriptional landscape of the mammalian genome.</title>
        <authorList>
            <person name="Carninci P."/>
            <person name="Kasukawa T."/>
            <person name="Katayama S."/>
            <person name="Gough J."/>
            <person name="Frith M.C."/>
            <person name="Maeda N."/>
            <person name="Oyama R."/>
            <person name="Ravasi T."/>
            <person name="Lenhard B."/>
            <person name="Wells C."/>
            <person name="Kodzius R."/>
            <person name="Shimokawa K."/>
            <person name="Bajic V.B."/>
            <person name="Brenner S.E."/>
            <person name="Batalov S."/>
            <person name="Forrest A.R."/>
            <person name="Zavolan M."/>
            <person name="Davis M.J."/>
            <person name="Wilming L.G."/>
            <person name="Aidinis V."/>
            <person name="Allen J.E."/>
            <person name="Ambesi-Impiombato A."/>
            <person name="Apweiler R."/>
            <person name="Aturaliya R.N."/>
            <person name="Bailey T.L."/>
            <person name="Bansal M."/>
            <person name="Baxter L."/>
            <person name="Beisel K.W."/>
            <person name="Bersano T."/>
            <person name="Bono H."/>
            <person name="Chalk A.M."/>
            <person name="Chiu K.P."/>
            <person name="Choudhary V."/>
            <person name="Christoffels A."/>
            <person name="Clutterbuck D.R."/>
            <person name="Crowe M.L."/>
            <person name="Dalla E."/>
            <person name="Dalrymple B.P."/>
            <person name="de Bono B."/>
            <person name="Della Gatta G."/>
            <person name="di Bernardo D."/>
            <person name="Down T."/>
            <person name="Engstrom P."/>
            <person name="Fagiolini M."/>
            <person name="Faulkner G."/>
            <person name="Fletcher C.F."/>
            <person name="Fukushima T."/>
            <person name="Furuno M."/>
            <person name="Futaki S."/>
            <person name="Gariboldi M."/>
            <person name="Georgii-Hemming P."/>
            <person name="Gingeras T.R."/>
            <person name="Gojobori T."/>
            <person name="Green R.E."/>
            <person name="Gustincich S."/>
            <person name="Harbers M."/>
            <person name="Hayashi Y."/>
            <person name="Hensch T.K."/>
            <person name="Hirokawa N."/>
            <person name="Hill D."/>
            <person name="Huminiecki L."/>
            <person name="Iacono M."/>
            <person name="Ikeo K."/>
            <person name="Iwama A."/>
            <person name="Ishikawa T."/>
            <person name="Jakt M."/>
            <person name="Kanapin A."/>
            <person name="Katoh M."/>
            <person name="Kawasawa Y."/>
            <person name="Kelso J."/>
            <person name="Kitamura H."/>
            <person name="Kitano H."/>
            <person name="Kollias G."/>
            <person name="Krishnan S.P."/>
            <person name="Kruger A."/>
            <person name="Kummerfeld S.K."/>
            <person name="Kurochkin I.V."/>
            <person name="Lareau L.F."/>
            <person name="Lazarevic D."/>
            <person name="Lipovich L."/>
            <person name="Liu J."/>
            <person name="Liuni S."/>
            <person name="McWilliam S."/>
            <person name="Madan Babu M."/>
            <person name="Madera M."/>
            <person name="Marchionni L."/>
            <person name="Matsuda H."/>
            <person name="Matsuzawa S."/>
            <person name="Miki H."/>
            <person name="Mignone F."/>
            <person name="Miyake S."/>
            <person name="Morris K."/>
            <person name="Mottagui-Tabar S."/>
            <person name="Mulder N."/>
            <person name="Nakano N."/>
            <person name="Nakauchi H."/>
            <person name="Ng P."/>
            <person name="Nilsson R."/>
            <person name="Nishiguchi S."/>
            <person name="Nishikawa S."/>
            <person name="Nori F."/>
            <person name="Ohara O."/>
            <person name="Okazaki Y."/>
            <person name="Orlando V."/>
            <person name="Pang K.C."/>
            <person name="Pavan W.J."/>
            <person name="Pavesi G."/>
            <person name="Pesole G."/>
            <person name="Petrovsky N."/>
            <person name="Piazza S."/>
            <person name="Reed J."/>
            <person name="Reid J.F."/>
            <person name="Ring B.Z."/>
            <person name="Ringwald M."/>
            <person name="Rost B."/>
            <person name="Ruan Y."/>
            <person name="Salzberg S.L."/>
            <person name="Sandelin A."/>
            <person name="Schneider C."/>
            <person name="Schoenbach C."/>
            <person name="Sekiguchi K."/>
            <person name="Semple C.A."/>
            <person name="Seno S."/>
            <person name="Sessa L."/>
            <person name="Sheng Y."/>
            <person name="Shibata Y."/>
            <person name="Shimada H."/>
            <person name="Shimada K."/>
            <person name="Silva D."/>
            <person name="Sinclair B."/>
            <person name="Sperling S."/>
            <person name="Stupka E."/>
            <person name="Sugiura K."/>
            <person name="Sultana R."/>
            <person name="Takenaka Y."/>
            <person name="Taki K."/>
            <person name="Tammoja K."/>
            <person name="Tan S.L."/>
            <person name="Tang S."/>
            <person name="Taylor M.S."/>
            <person name="Tegner J."/>
            <person name="Teichmann S.A."/>
            <person name="Ueda H.R."/>
            <person name="van Nimwegen E."/>
            <person name="Verardo R."/>
            <person name="Wei C.L."/>
            <person name="Yagi K."/>
            <person name="Yamanishi H."/>
            <person name="Zabarovsky E."/>
            <person name="Zhu S."/>
            <person name="Zimmer A."/>
            <person name="Hide W."/>
            <person name="Bult C."/>
            <person name="Grimmond S.M."/>
            <person name="Teasdale R.D."/>
            <person name="Liu E.T."/>
            <person name="Brusic V."/>
            <person name="Quackenbush J."/>
            <person name="Wahlestedt C."/>
            <person name="Mattick J.S."/>
            <person name="Hume D.A."/>
            <person name="Kai C."/>
            <person name="Sasaki D."/>
            <person name="Tomaru Y."/>
            <person name="Fukuda S."/>
            <person name="Kanamori-Katayama M."/>
            <person name="Suzuki M."/>
            <person name="Aoki J."/>
            <person name="Arakawa T."/>
            <person name="Iida J."/>
            <person name="Imamura K."/>
            <person name="Itoh M."/>
            <person name="Kato T."/>
            <person name="Kawaji H."/>
            <person name="Kawagashira N."/>
            <person name="Kawashima T."/>
            <person name="Kojima M."/>
            <person name="Kondo S."/>
            <person name="Konno H."/>
            <person name="Nakano K."/>
            <person name="Ninomiya N."/>
            <person name="Nishio T."/>
            <person name="Okada M."/>
            <person name="Plessy C."/>
            <person name="Shibata K."/>
            <person name="Shiraki T."/>
            <person name="Suzuki S."/>
            <person name="Tagami M."/>
            <person name="Waki K."/>
            <person name="Watahiki A."/>
            <person name="Okamura-Oho Y."/>
            <person name="Suzuki H."/>
            <person name="Kawai J."/>
            <person name="Hayashizaki Y."/>
        </authorList>
    </citation>
    <scope>NUCLEOTIDE SEQUENCE [LARGE SCALE MRNA]</scope>
    <source>
        <strain>C57BL/6J</strain>
        <tissue>Pituitary</tissue>
    </source>
</reference>
<reference key="2">
    <citation type="journal article" date="2004" name="Genome Res.">
        <title>The status, quality, and expansion of the NIH full-length cDNA project: the Mammalian Gene Collection (MGC).</title>
        <authorList>
            <consortium name="The MGC Project Team"/>
        </authorList>
    </citation>
    <scope>NUCLEOTIDE SEQUENCE [LARGE SCALE MRNA]</scope>
    <source>
        <strain>FVB/N</strain>
        <tissue>Mammary tumor</tissue>
    </source>
</reference>
<reference key="3">
    <citation type="journal article" date="2009" name="Bone">
        <title>T-cell leukemia translocation-associated gene (TCTA) protein is required for human osteoclastogenesis.</title>
        <authorList>
            <person name="Kotake S."/>
            <person name="Nanke Y."/>
            <person name="Kawamoto M."/>
            <person name="Yago T."/>
            <person name="Udagawa N."/>
            <person name="Ichikawa N."/>
            <person name="Kobashigawa T."/>
            <person name="Saito S."/>
            <person name="Momohara S."/>
            <person name="Kamatani N."/>
            <person name="Yamanaka H."/>
        </authorList>
    </citation>
    <scope>FUNCTION</scope>
</reference>